<name>NDK_SOLLC</name>
<organism>
    <name type="scientific">Solanum lycopersicum</name>
    <name type="common">Tomato</name>
    <name type="synonym">Lycopersicon esculentum</name>
    <dbReference type="NCBI Taxonomy" id="4081"/>
    <lineage>
        <taxon>Eukaryota</taxon>
        <taxon>Viridiplantae</taxon>
        <taxon>Streptophyta</taxon>
        <taxon>Embryophyta</taxon>
        <taxon>Tracheophyta</taxon>
        <taxon>Spermatophyta</taxon>
        <taxon>Magnoliopsida</taxon>
        <taxon>eudicotyledons</taxon>
        <taxon>Gunneridae</taxon>
        <taxon>Pentapetalae</taxon>
        <taxon>asterids</taxon>
        <taxon>lamiids</taxon>
        <taxon>Solanales</taxon>
        <taxon>Solanaceae</taxon>
        <taxon>Solanoideae</taxon>
        <taxon>Solaneae</taxon>
        <taxon>Solanum</taxon>
        <taxon>Solanum subgen. Lycopersicon</taxon>
    </lineage>
</organism>
<protein>
    <recommendedName>
        <fullName>Nucleoside diphosphate kinase</fullName>
        <shortName>NDK</shortName>
        <shortName>NDP kinase</shortName>
        <ecNumber>2.7.4.6</ecNumber>
    </recommendedName>
</protein>
<evidence type="ECO:0000250" key="1"/>
<evidence type="ECO:0000305" key="2"/>
<reference key="1">
    <citation type="journal article" date="1994" name="Plant Mol. Biol.">
        <title>Isolation of a mRNA encoding a nucleoside diphosphate kinase from tomato that is up-regulated by wounding.</title>
        <authorList>
            <person name="Harris N."/>
            <person name="Taylor J.E."/>
            <person name="Roberts J.A."/>
        </authorList>
    </citation>
    <scope>NUCLEOTIDE SEQUENCE [MRNA]</scope>
    <source>
        <strain>cv. Ailsa Craig</strain>
    </source>
</reference>
<dbReference type="EC" id="2.7.4.6"/>
<dbReference type="EMBL" id="X75324">
    <property type="protein sequence ID" value="CAA53073.1"/>
    <property type="status" value="ALT_INIT"/>
    <property type="molecule type" value="mRNA"/>
</dbReference>
<dbReference type="PIR" id="S47974">
    <property type="entry name" value="S47974"/>
</dbReference>
<dbReference type="SMR" id="P47921"/>
<dbReference type="FunCoup" id="P47921">
    <property type="interactions" value="1489"/>
</dbReference>
<dbReference type="STRING" id="4081.P47921"/>
<dbReference type="PaxDb" id="4081-Solyc01g089970.2.1"/>
<dbReference type="eggNOG" id="KOG0888">
    <property type="taxonomic scope" value="Eukaryota"/>
</dbReference>
<dbReference type="InParanoid" id="P47921"/>
<dbReference type="Proteomes" id="UP000004994">
    <property type="component" value="Unplaced"/>
</dbReference>
<dbReference type="ExpressionAtlas" id="P47921">
    <property type="expression patterns" value="baseline"/>
</dbReference>
<dbReference type="GO" id="GO:0005524">
    <property type="term" value="F:ATP binding"/>
    <property type="evidence" value="ECO:0007669"/>
    <property type="project" value="UniProtKB-KW"/>
</dbReference>
<dbReference type="GO" id="GO:0046872">
    <property type="term" value="F:metal ion binding"/>
    <property type="evidence" value="ECO:0007669"/>
    <property type="project" value="UniProtKB-KW"/>
</dbReference>
<dbReference type="GO" id="GO:0004550">
    <property type="term" value="F:nucleoside diphosphate kinase activity"/>
    <property type="evidence" value="ECO:0007669"/>
    <property type="project" value="UniProtKB-EC"/>
</dbReference>
<dbReference type="GO" id="GO:0006241">
    <property type="term" value="P:CTP biosynthetic process"/>
    <property type="evidence" value="ECO:0007669"/>
    <property type="project" value="InterPro"/>
</dbReference>
<dbReference type="GO" id="GO:0006183">
    <property type="term" value="P:GTP biosynthetic process"/>
    <property type="evidence" value="ECO:0007669"/>
    <property type="project" value="InterPro"/>
</dbReference>
<dbReference type="GO" id="GO:0006228">
    <property type="term" value="P:UTP biosynthetic process"/>
    <property type="evidence" value="ECO:0007669"/>
    <property type="project" value="InterPro"/>
</dbReference>
<dbReference type="CDD" id="cd04413">
    <property type="entry name" value="NDPk_I"/>
    <property type="match status" value="1"/>
</dbReference>
<dbReference type="FunFam" id="3.30.70.141:FF:000002">
    <property type="entry name" value="Nucleoside diphosphate kinase"/>
    <property type="match status" value="1"/>
</dbReference>
<dbReference type="Gene3D" id="3.30.70.141">
    <property type="entry name" value="Nucleoside diphosphate kinase-like domain"/>
    <property type="match status" value="1"/>
</dbReference>
<dbReference type="HAMAP" id="MF_00451">
    <property type="entry name" value="NDP_kinase"/>
    <property type="match status" value="1"/>
</dbReference>
<dbReference type="InterPro" id="IPR034907">
    <property type="entry name" value="NDK-like_dom"/>
</dbReference>
<dbReference type="InterPro" id="IPR036850">
    <property type="entry name" value="NDK-like_dom_sf"/>
</dbReference>
<dbReference type="InterPro" id="IPR001564">
    <property type="entry name" value="Nucleoside_diP_kinase"/>
</dbReference>
<dbReference type="InterPro" id="IPR023005">
    <property type="entry name" value="Nucleoside_diP_kinase_AS"/>
</dbReference>
<dbReference type="NCBIfam" id="NF001908">
    <property type="entry name" value="PRK00668.1"/>
    <property type="match status" value="1"/>
</dbReference>
<dbReference type="PANTHER" id="PTHR11349">
    <property type="entry name" value="NUCLEOSIDE DIPHOSPHATE KINASE"/>
    <property type="match status" value="1"/>
</dbReference>
<dbReference type="Pfam" id="PF00334">
    <property type="entry name" value="NDK"/>
    <property type="match status" value="1"/>
</dbReference>
<dbReference type="PRINTS" id="PR01243">
    <property type="entry name" value="NUCDPKINASE"/>
</dbReference>
<dbReference type="SMART" id="SM00562">
    <property type="entry name" value="NDK"/>
    <property type="match status" value="1"/>
</dbReference>
<dbReference type="SUPFAM" id="SSF54919">
    <property type="entry name" value="Nucleoside diphosphate kinase, NDK"/>
    <property type="match status" value="1"/>
</dbReference>
<dbReference type="PROSITE" id="PS00469">
    <property type="entry name" value="NDPK"/>
    <property type="match status" value="1"/>
</dbReference>
<dbReference type="PROSITE" id="PS51374">
    <property type="entry name" value="NDPK_LIKE"/>
    <property type="match status" value="1"/>
</dbReference>
<proteinExistence type="evidence at transcript level"/>
<keyword id="KW-0067">ATP-binding</keyword>
<keyword id="KW-0418">Kinase</keyword>
<keyword id="KW-0460">Magnesium</keyword>
<keyword id="KW-0479">Metal-binding</keyword>
<keyword id="KW-0546">Nucleotide metabolism</keyword>
<keyword id="KW-0547">Nucleotide-binding</keyword>
<keyword id="KW-0597">Phosphoprotein</keyword>
<keyword id="KW-1185">Reference proteome</keyword>
<keyword id="KW-0808">Transferase</keyword>
<feature type="chain" id="PRO_0000137139" description="Nucleoside diphosphate kinase">
    <location>
        <begin position="1" status="less than"/>
        <end position="144"/>
    </location>
</feature>
<feature type="active site" description="Pros-phosphohistidine intermediate" evidence="1">
    <location>
        <position position="111"/>
    </location>
</feature>
<feature type="binding site" evidence="1">
    <location>
        <position position="5"/>
    </location>
    <ligand>
        <name>ATP</name>
        <dbReference type="ChEBI" id="CHEBI:30616"/>
    </ligand>
</feature>
<feature type="binding site" evidence="1">
    <location>
        <position position="53"/>
    </location>
    <ligand>
        <name>ATP</name>
        <dbReference type="ChEBI" id="CHEBI:30616"/>
    </ligand>
</feature>
<feature type="binding site" evidence="1">
    <location>
        <position position="81"/>
    </location>
    <ligand>
        <name>ATP</name>
        <dbReference type="ChEBI" id="CHEBI:30616"/>
    </ligand>
</feature>
<feature type="binding site" evidence="1">
    <location>
        <position position="87"/>
    </location>
    <ligand>
        <name>ATP</name>
        <dbReference type="ChEBI" id="CHEBI:30616"/>
    </ligand>
</feature>
<feature type="binding site" evidence="1">
    <location>
        <position position="98"/>
    </location>
    <ligand>
        <name>ATP</name>
        <dbReference type="ChEBI" id="CHEBI:30616"/>
    </ligand>
</feature>
<feature type="binding site" evidence="1">
    <location>
        <position position="108"/>
    </location>
    <ligand>
        <name>ATP</name>
        <dbReference type="ChEBI" id="CHEBI:30616"/>
    </ligand>
</feature>
<feature type="non-terminal residue">
    <location>
        <position position="1"/>
    </location>
</feature>
<comment type="function">
    <text>Major role in the synthesis of nucleoside triphosphates other than ATP. The ATP gamma phosphate is transferred to the NDP beta phosphate via a ping-pong mechanism, using a phosphorylated active-site intermediate.</text>
</comment>
<comment type="catalytic activity">
    <reaction>
        <text>a 2'-deoxyribonucleoside 5'-diphosphate + ATP = a 2'-deoxyribonucleoside 5'-triphosphate + ADP</text>
        <dbReference type="Rhea" id="RHEA:44640"/>
        <dbReference type="ChEBI" id="CHEBI:30616"/>
        <dbReference type="ChEBI" id="CHEBI:61560"/>
        <dbReference type="ChEBI" id="CHEBI:73316"/>
        <dbReference type="ChEBI" id="CHEBI:456216"/>
        <dbReference type="EC" id="2.7.4.6"/>
    </reaction>
</comment>
<comment type="catalytic activity">
    <reaction>
        <text>a ribonucleoside 5'-diphosphate + ATP = a ribonucleoside 5'-triphosphate + ADP</text>
        <dbReference type="Rhea" id="RHEA:18113"/>
        <dbReference type="ChEBI" id="CHEBI:30616"/>
        <dbReference type="ChEBI" id="CHEBI:57930"/>
        <dbReference type="ChEBI" id="CHEBI:61557"/>
        <dbReference type="ChEBI" id="CHEBI:456216"/>
        <dbReference type="EC" id="2.7.4.6"/>
    </reaction>
</comment>
<comment type="cofactor">
    <cofactor evidence="1">
        <name>Mg(2+)</name>
        <dbReference type="ChEBI" id="CHEBI:18420"/>
    </cofactor>
</comment>
<comment type="similarity">
    <text evidence="2">Belongs to the NDK family.</text>
</comment>
<comment type="sequence caution" evidence="2">
    <conflict type="erroneous initiation">
        <sequence resource="EMBL-CDS" id="CAA53073"/>
    </conflict>
</comment>
<sequence length="144" mass="15679">FIMIKPDGVQRGLVGEIISRFEKKGFSLKGLKLITVDRAFAEKHYADLSAKPFFNGLVEYIVSGPVVAMVWEGKGVVATGRKIIGATNPLESAAGTIRGDFAIDIGRNVIHGSDAVESARKEIALWFPEGIAEWQSSLHSCIYE</sequence>
<accession>P47921</accession>